<sequence>MEPAVSLAVCALLFLLWVRVKGLEFVLIHQRWVFVCLFLLPLSLIFDIYYYVRAWVVFKLSSAPRLHEQRVRDIQKQVREWKEQGSKTFMCTGRPGWLTVSLRVGKYKKTHKNIMINLMDILEVDTKKQIVRVEPLVSMGQVTALLNSIGWTLPVLPELDDLTVGGLIMGTGIESSSHKYGLFQHICTAYELILADGSFVRCTPSENSDLFYAVPWSCGTLGFLVAAEIRIIPAKKYVKLRFEPVRGLEAICEKFTRESQRLENHFVEGLLYSLDEAVIMTGVMTDDVEPSKLNSIGSYYKPWFFKHVENYLKTNREGLEYIPLRHYYHRHTRSIFWELQDIIPFGNNPIFRYLFGWMVPPKISLLKLTQGETLRKLYEQHHVVQDMLVPMKCMSQALHTFQNDIHVYPIWLCPFILPSQPGLVHPKGDEAELYVDIGAYGEPRVKHFEARSCMRQLEKFVRSVHGFQMLYADCYMNREEFWEMFDGSLYHKLRKQLGCQDAFPEVYDKICKAARH</sequence>
<accession>Q8VCH6</accession>
<accession>Q6ZQK9</accession>
<accession>Q91ZD0</accession>
<accession>Q9CU63</accession>
<reference key="1">
    <citation type="journal article" date="2001" name="Am. J. Hum. Genet.">
        <title>Mutations in the 3beta-hydroxysterol delta24-reductase gene cause desmosterolosis, an autosomal recessive disorder of cholesterol biosynthesis.</title>
        <authorList>
            <person name="Waterham H.R."/>
            <person name="Koster J."/>
            <person name="Romeijn G.J."/>
            <person name="Hennekam R.C.M."/>
            <person name="Vreken P."/>
            <person name="Andersson H.C."/>
            <person name="FitzPatrick D.R."/>
            <person name="Kelley R.I."/>
            <person name="Wanders R.J.A."/>
        </authorList>
    </citation>
    <scope>NUCLEOTIDE SEQUENCE [MRNA]</scope>
</reference>
<reference key="2">
    <citation type="journal article" date="2003" name="DNA Res.">
        <title>Prediction of the coding sequences of mouse homologues of KIAA gene: III. The complete nucleotide sequences of 500 mouse KIAA-homologous cDNAs identified by screening of terminal sequences of cDNA clones randomly sampled from size-fractionated libraries.</title>
        <authorList>
            <person name="Okazaki N."/>
            <person name="Kikuno R."/>
            <person name="Ohara R."/>
            <person name="Inamoto S."/>
            <person name="Koseki H."/>
            <person name="Hiraoka S."/>
            <person name="Saga Y."/>
            <person name="Nagase T."/>
            <person name="Ohara O."/>
            <person name="Koga H."/>
        </authorList>
    </citation>
    <scope>NUCLEOTIDE SEQUENCE [LARGE SCALE MRNA]</scope>
    <source>
        <tissue>Fetal brain</tissue>
    </source>
</reference>
<reference key="3">
    <citation type="journal article" date="2009" name="PLoS Biol.">
        <title>Lineage-specific biology revealed by a finished genome assembly of the mouse.</title>
        <authorList>
            <person name="Church D.M."/>
            <person name="Goodstadt L."/>
            <person name="Hillier L.W."/>
            <person name="Zody M.C."/>
            <person name="Goldstein S."/>
            <person name="She X."/>
            <person name="Bult C.J."/>
            <person name="Agarwala R."/>
            <person name="Cherry J.L."/>
            <person name="DiCuccio M."/>
            <person name="Hlavina W."/>
            <person name="Kapustin Y."/>
            <person name="Meric P."/>
            <person name="Maglott D."/>
            <person name="Birtle Z."/>
            <person name="Marques A.C."/>
            <person name="Graves T."/>
            <person name="Zhou S."/>
            <person name="Teague B."/>
            <person name="Potamousis K."/>
            <person name="Churas C."/>
            <person name="Place M."/>
            <person name="Herschleb J."/>
            <person name="Runnheim R."/>
            <person name="Forrest D."/>
            <person name="Amos-Landgraf J."/>
            <person name="Schwartz D.C."/>
            <person name="Cheng Z."/>
            <person name="Lindblad-Toh K."/>
            <person name="Eichler E.E."/>
            <person name="Ponting C.P."/>
        </authorList>
    </citation>
    <scope>NUCLEOTIDE SEQUENCE [LARGE SCALE GENOMIC DNA]</scope>
    <source>
        <strain>C57BL/6J</strain>
    </source>
</reference>
<reference key="4">
    <citation type="journal article" date="2004" name="Genome Res.">
        <title>The status, quality, and expansion of the NIH full-length cDNA project: the Mammalian Gene Collection (MGC).</title>
        <authorList>
            <consortium name="The MGC Project Team"/>
        </authorList>
    </citation>
    <scope>NUCLEOTIDE SEQUENCE [LARGE SCALE MRNA]</scope>
    <source>
        <strain>FVB/N</strain>
        <tissue>Liver</tissue>
    </source>
</reference>
<reference key="5">
    <citation type="journal article" date="2005" name="Science">
        <title>The transcriptional landscape of the mammalian genome.</title>
        <authorList>
            <person name="Carninci P."/>
            <person name="Kasukawa T."/>
            <person name="Katayama S."/>
            <person name="Gough J."/>
            <person name="Frith M.C."/>
            <person name="Maeda N."/>
            <person name="Oyama R."/>
            <person name="Ravasi T."/>
            <person name="Lenhard B."/>
            <person name="Wells C."/>
            <person name="Kodzius R."/>
            <person name="Shimokawa K."/>
            <person name="Bajic V.B."/>
            <person name="Brenner S.E."/>
            <person name="Batalov S."/>
            <person name="Forrest A.R."/>
            <person name="Zavolan M."/>
            <person name="Davis M.J."/>
            <person name="Wilming L.G."/>
            <person name="Aidinis V."/>
            <person name="Allen J.E."/>
            <person name="Ambesi-Impiombato A."/>
            <person name="Apweiler R."/>
            <person name="Aturaliya R.N."/>
            <person name="Bailey T.L."/>
            <person name="Bansal M."/>
            <person name="Baxter L."/>
            <person name="Beisel K.W."/>
            <person name="Bersano T."/>
            <person name="Bono H."/>
            <person name="Chalk A.M."/>
            <person name="Chiu K.P."/>
            <person name="Choudhary V."/>
            <person name="Christoffels A."/>
            <person name="Clutterbuck D.R."/>
            <person name="Crowe M.L."/>
            <person name="Dalla E."/>
            <person name="Dalrymple B.P."/>
            <person name="de Bono B."/>
            <person name="Della Gatta G."/>
            <person name="di Bernardo D."/>
            <person name="Down T."/>
            <person name="Engstrom P."/>
            <person name="Fagiolini M."/>
            <person name="Faulkner G."/>
            <person name="Fletcher C.F."/>
            <person name="Fukushima T."/>
            <person name="Furuno M."/>
            <person name="Futaki S."/>
            <person name="Gariboldi M."/>
            <person name="Georgii-Hemming P."/>
            <person name="Gingeras T.R."/>
            <person name="Gojobori T."/>
            <person name="Green R.E."/>
            <person name="Gustincich S."/>
            <person name="Harbers M."/>
            <person name="Hayashi Y."/>
            <person name="Hensch T.K."/>
            <person name="Hirokawa N."/>
            <person name="Hill D."/>
            <person name="Huminiecki L."/>
            <person name="Iacono M."/>
            <person name="Ikeo K."/>
            <person name="Iwama A."/>
            <person name="Ishikawa T."/>
            <person name="Jakt M."/>
            <person name="Kanapin A."/>
            <person name="Katoh M."/>
            <person name="Kawasawa Y."/>
            <person name="Kelso J."/>
            <person name="Kitamura H."/>
            <person name="Kitano H."/>
            <person name="Kollias G."/>
            <person name="Krishnan S.P."/>
            <person name="Kruger A."/>
            <person name="Kummerfeld S.K."/>
            <person name="Kurochkin I.V."/>
            <person name="Lareau L.F."/>
            <person name="Lazarevic D."/>
            <person name="Lipovich L."/>
            <person name="Liu J."/>
            <person name="Liuni S."/>
            <person name="McWilliam S."/>
            <person name="Madan Babu M."/>
            <person name="Madera M."/>
            <person name="Marchionni L."/>
            <person name="Matsuda H."/>
            <person name="Matsuzawa S."/>
            <person name="Miki H."/>
            <person name="Mignone F."/>
            <person name="Miyake S."/>
            <person name="Morris K."/>
            <person name="Mottagui-Tabar S."/>
            <person name="Mulder N."/>
            <person name="Nakano N."/>
            <person name="Nakauchi H."/>
            <person name="Ng P."/>
            <person name="Nilsson R."/>
            <person name="Nishiguchi S."/>
            <person name="Nishikawa S."/>
            <person name="Nori F."/>
            <person name="Ohara O."/>
            <person name="Okazaki Y."/>
            <person name="Orlando V."/>
            <person name="Pang K.C."/>
            <person name="Pavan W.J."/>
            <person name="Pavesi G."/>
            <person name="Pesole G."/>
            <person name="Petrovsky N."/>
            <person name="Piazza S."/>
            <person name="Reed J."/>
            <person name="Reid J.F."/>
            <person name="Ring B.Z."/>
            <person name="Ringwald M."/>
            <person name="Rost B."/>
            <person name="Ruan Y."/>
            <person name="Salzberg S.L."/>
            <person name="Sandelin A."/>
            <person name="Schneider C."/>
            <person name="Schoenbach C."/>
            <person name="Sekiguchi K."/>
            <person name="Semple C.A."/>
            <person name="Seno S."/>
            <person name="Sessa L."/>
            <person name="Sheng Y."/>
            <person name="Shibata Y."/>
            <person name="Shimada H."/>
            <person name="Shimada K."/>
            <person name="Silva D."/>
            <person name="Sinclair B."/>
            <person name="Sperling S."/>
            <person name="Stupka E."/>
            <person name="Sugiura K."/>
            <person name="Sultana R."/>
            <person name="Takenaka Y."/>
            <person name="Taki K."/>
            <person name="Tammoja K."/>
            <person name="Tan S.L."/>
            <person name="Tang S."/>
            <person name="Taylor M.S."/>
            <person name="Tegner J."/>
            <person name="Teichmann S.A."/>
            <person name="Ueda H.R."/>
            <person name="van Nimwegen E."/>
            <person name="Verardo R."/>
            <person name="Wei C.L."/>
            <person name="Yagi K."/>
            <person name="Yamanishi H."/>
            <person name="Zabarovsky E."/>
            <person name="Zhu S."/>
            <person name="Zimmer A."/>
            <person name="Hide W."/>
            <person name="Bult C."/>
            <person name="Grimmond S.M."/>
            <person name="Teasdale R.D."/>
            <person name="Liu E.T."/>
            <person name="Brusic V."/>
            <person name="Quackenbush J."/>
            <person name="Wahlestedt C."/>
            <person name="Mattick J.S."/>
            <person name="Hume D.A."/>
            <person name="Kai C."/>
            <person name="Sasaki D."/>
            <person name="Tomaru Y."/>
            <person name="Fukuda S."/>
            <person name="Kanamori-Katayama M."/>
            <person name="Suzuki M."/>
            <person name="Aoki J."/>
            <person name="Arakawa T."/>
            <person name="Iida J."/>
            <person name="Imamura K."/>
            <person name="Itoh M."/>
            <person name="Kato T."/>
            <person name="Kawaji H."/>
            <person name="Kawagashira N."/>
            <person name="Kawashima T."/>
            <person name="Kojima M."/>
            <person name="Kondo S."/>
            <person name="Konno H."/>
            <person name="Nakano K."/>
            <person name="Ninomiya N."/>
            <person name="Nishio T."/>
            <person name="Okada M."/>
            <person name="Plessy C."/>
            <person name="Shibata K."/>
            <person name="Shiraki T."/>
            <person name="Suzuki S."/>
            <person name="Tagami M."/>
            <person name="Waki K."/>
            <person name="Watahiki A."/>
            <person name="Okamura-Oho Y."/>
            <person name="Suzuki H."/>
            <person name="Kawai J."/>
            <person name="Hayashizaki Y."/>
        </authorList>
    </citation>
    <scope>NUCLEOTIDE SEQUENCE [LARGE SCALE MRNA] OF 38-516</scope>
    <source>
        <strain>C57BL/6J</strain>
        <tissue>Thymus</tissue>
    </source>
</reference>
<reference key="6">
    <citation type="journal article" date="2010" name="Cell">
        <title>A tissue-specific atlas of mouse protein phosphorylation and expression.</title>
        <authorList>
            <person name="Huttlin E.L."/>
            <person name="Jedrychowski M.P."/>
            <person name="Elias J.E."/>
            <person name="Goswami T."/>
            <person name="Rad R."/>
            <person name="Beausoleil S.A."/>
            <person name="Villen J."/>
            <person name="Haas W."/>
            <person name="Sowa M.E."/>
            <person name="Gygi S.P."/>
        </authorList>
    </citation>
    <scope>IDENTIFICATION BY MASS SPECTROMETRY [LARGE SCALE ANALYSIS]</scope>
    <source>
        <tissue>Kidney</tissue>
        <tissue>Liver</tissue>
        <tissue>Lung</tissue>
    </source>
</reference>
<reference key="7">
    <citation type="journal article" date="2015" name="Elife">
        <title>Flux analysis of cholesterol biosynthesis in vivo reveals multiple tissue and cell-type specific pathways.</title>
        <authorList>
            <person name="Mitsche M.A."/>
            <person name="McDonald J.G."/>
            <person name="Hobbs H.H."/>
            <person name="Cohen J.C."/>
        </authorList>
    </citation>
    <scope>CATALYTIC ACTIVITY</scope>
</reference>
<name>DHC24_MOUSE</name>
<protein>
    <recommendedName>
        <fullName>Delta(24)-sterol reductase</fullName>
        <ecNumber evidence="5">1.3.1.72</ecNumber>
    </recommendedName>
    <alternativeName>
        <fullName>24-dehydrocholesterol reductase</fullName>
    </alternativeName>
    <alternativeName>
        <fullName evidence="6">3-beta-hydroxysterol Delta-24-reductase</fullName>
    </alternativeName>
</protein>
<keyword id="KW-0152">Cholesterol biosynthesis</keyword>
<keyword id="KW-0153">Cholesterol metabolism</keyword>
<keyword id="KW-0256">Endoplasmic reticulum</keyword>
<keyword id="KW-0274">FAD</keyword>
<keyword id="KW-0285">Flavoprotein</keyword>
<keyword id="KW-0333">Golgi apparatus</keyword>
<keyword id="KW-0444">Lipid biosynthesis</keyword>
<keyword id="KW-0443">Lipid metabolism</keyword>
<keyword id="KW-0472">Membrane</keyword>
<keyword id="KW-0521">NADP</keyword>
<keyword id="KW-0560">Oxidoreductase</keyword>
<keyword id="KW-1185">Reference proteome</keyword>
<keyword id="KW-0732">Signal</keyword>
<keyword id="KW-0752">Steroid biosynthesis</keyword>
<keyword id="KW-0753">Steroid metabolism</keyword>
<keyword id="KW-0756">Sterol biosynthesis</keyword>
<keyword id="KW-1207">Sterol metabolism</keyword>
<keyword id="KW-0812">Transmembrane</keyword>
<keyword id="KW-1133">Transmembrane helix</keyword>
<evidence type="ECO:0000250" key="1"/>
<evidence type="ECO:0000250" key="2">
    <source>
        <dbReference type="UniProtKB" id="Q15392"/>
    </source>
</evidence>
<evidence type="ECO:0000255" key="3"/>
<evidence type="ECO:0000255" key="4">
    <source>
        <dbReference type="PROSITE-ProRule" id="PRU00718"/>
    </source>
</evidence>
<evidence type="ECO:0000269" key="5">
    <source>
    </source>
</evidence>
<evidence type="ECO:0000303" key="6">
    <source>
    </source>
</evidence>
<evidence type="ECO:0000305" key="7"/>
<evidence type="ECO:0000305" key="8">
    <source>
    </source>
</evidence>
<dbReference type="EC" id="1.3.1.72" evidence="5"/>
<dbReference type="EMBL" id="AY039762">
    <property type="protein sequence ID" value="AAK72106.1"/>
    <property type="molecule type" value="mRNA"/>
</dbReference>
<dbReference type="EMBL" id="AK129036">
    <property type="protein sequence ID" value="BAC97846.1"/>
    <property type="status" value="ALT_INIT"/>
    <property type="molecule type" value="mRNA"/>
</dbReference>
<dbReference type="EMBL" id="AL929585">
    <property type="status" value="NOT_ANNOTATED_CDS"/>
    <property type="molecule type" value="Genomic_DNA"/>
</dbReference>
<dbReference type="EMBL" id="BX511043">
    <property type="status" value="NOT_ANNOTATED_CDS"/>
    <property type="molecule type" value="Genomic_DNA"/>
</dbReference>
<dbReference type="EMBL" id="BC019797">
    <property type="protein sequence ID" value="AAH19797.1"/>
    <property type="molecule type" value="mRNA"/>
</dbReference>
<dbReference type="EMBL" id="AK017937">
    <property type="protein sequence ID" value="BAB31012.1"/>
    <property type="molecule type" value="mRNA"/>
</dbReference>
<dbReference type="CCDS" id="CCDS18420.1"/>
<dbReference type="RefSeq" id="NP_444502.2">
    <property type="nucleotide sequence ID" value="NM_053272.3"/>
</dbReference>
<dbReference type="SMR" id="Q8VCH6"/>
<dbReference type="BioGRID" id="216997">
    <property type="interactions" value="2"/>
</dbReference>
<dbReference type="FunCoup" id="Q8VCH6">
    <property type="interactions" value="951"/>
</dbReference>
<dbReference type="STRING" id="10090.ENSMUSP00000038063"/>
<dbReference type="ChEMBL" id="CHEMBL3774292"/>
<dbReference type="SwissLipids" id="SLP:000001298"/>
<dbReference type="iPTMnet" id="Q8VCH6"/>
<dbReference type="PhosphoSitePlus" id="Q8VCH6"/>
<dbReference type="SwissPalm" id="Q8VCH6"/>
<dbReference type="jPOST" id="Q8VCH6"/>
<dbReference type="PaxDb" id="10090-ENSMUSP00000038063"/>
<dbReference type="PeptideAtlas" id="Q8VCH6"/>
<dbReference type="ProteomicsDB" id="277331"/>
<dbReference type="Pumba" id="Q8VCH6"/>
<dbReference type="Antibodypedia" id="33226">
    <property type="antibodies" value="238 antibodies from 30 providers"/>
</dbReference>
<dbReference type="DNASU" id="74754"/>
<dbReference type="Ensembl" id="ENSMUST00000047973.4">
    <property type="protein sequence ID" value="ENSMUSP00000038063.4"/>
    <property type="gene ID" value="ENSMUSG00000034926.4"/>
</dbReference>
<dbReference type="GeneID" id="74754"/>
<dbReference type="KEGG" id="mmu:74754"/>
<dbReference type="UCSC" id="uc008tyl.1">
    <property type="organism name" value="mouse"/>
</dbReference>
<dbReference type="AGR" id="MGI:1922004"/>
<dbReference type="CTD" id="1718"/>
<dbReference type="MGI" id="MGI:1922004">
    <property type="gene designation" value="Dhcr24"/>
</dbReference>
<dbReference type="VEuPathDB" id="HostDB:ENSMUSG00000034926"/>
<dbReference type="eggNOG" id="KOG1262">
    <property type="taxonomic scope" value="Eukaryota"/>
</dbReference>
<dbReference type="GeneTree" id="ENSGT00390000008338"/>
<dbReference type="HOGENOM" id="CLU_025883_4_0_1"/>
<dbReference type="InParanoid" id="Q8VCH6"/>
<dbReference type="OMA" id="WVGRSAF"/>
<dbReference type="OrthoDB" id="415825at2759"/>
<dbReference type="PhylomeDB" id="Q8VCH6"/>
<dbReference type="TreeFam" id="TF313170"/>
<dbReference type="BRENDA" id="1.3.1.72">
    <property type="organism ID" value="3474"/>
</dbReference>
<dbReference type="Reactome" id="R-MMU-191273">
    <property type="pathway name" value="Cholesterol biosynthesis"/>
</dbReference>
<dbReference type="Reactome" id="R-MMU-6807047">
    <property type="pathway name" value="Cholesterol biosynthesis via desmosterol"/>
</dbReference>
<dbReference type="Reactome" id="R-MMU-6807062">
    <property type="pathway name" value="Cholesterol biosynthesis via lathosterol"/>
</dbReference>
<dbReference type="UniPathway" id="UPA00063"/>
<dbReference type="BioGRID-ORCS" id="74754">
    <property type="hits" value="3 hits in 77 CRISPR screens"/>
</dbReference>
<dbReference type="ChiTaRS" id="Dhcr24">
    <property type="organism name" value="mouse"/>
</dbReference>
<dbReference type="PRO" id="PR:Q8VCH6"/>
<dbReference type="Proteomes" id="UP000000589">
    <property type="component" value="Chromosome 4"/>
</dbReference>
<dbReference type="RNAct" id="Q8VCH6">
    <property type="molecule type" value="protein"/>
</dbReference>
<dbReference type="Bgee" id="ENSMUSG00000034926">
    <property type="expression patterns" value="Expressed in lip and 266 other cell types or tissues"/>
</dbReference>
<dbReference type="GO" id="GO:0005783">
    <property type="term" value="C:endoplasmic reticulum"/>
    <property type="evidence" value="ECO:0000250"/>
    <property type="project" value="UniProtKB"/>
</dbReference>
<dbReference type="GO" id="GO:0005789">
    <property type="term" value="C:endoplasmic reticulum membrane"/>
    <property type="evidence" value="ECO:0007669"/>
    <property type="project" value="UniProtKB-SubCell"/>
</dbReference>
<dbReference type="GO" id="GO:0000139">
    <property type="term" value="C:Golgi membrane"/>
    <property type="evidence" value="ECO:0007669"/>
    <property type="project" value="UniProtKB-SubCell"/>
</dbReference>
<dbReference type="GO" id="GO:0005634">
    <property type="term" value="C:nucleus"/>
    <property type="evidence" value="ECO:0000250"/>
    <property type="project" value="UniProtKB"/>
</dbReference>
<dbReference type="GO" id="GO:0000246">
    <property type="term" value="F:Delta24(24-1) sterol reductase activity"/>
    <property type="evidence" value="ECO:0007669"/>
    <property type="project" value="Ensembl"/>
</dbReference>
<dbReference type="GO" id="GO:0050614">
    <property type="term" value="F:Delta24-sterol reductase activity"/>
    <property type="evidence" value="ECO:0007669"/>
    <property type="project" value="UniProtKB-EC"/>
</dbReference>
<dbReference type="GO" id="GO:0019899">
    <property type="term" value="F:enzyme binding"/>
    <property type="evidence" value="ECO:0000250"/>
    <property type="project" value="UniProtKB"/>
</dbReference>
<dbReference type="GO" id="GO:0071949">
    <property type="term" value="F:FAD binding"/>
    <property type="evidence" value="ECO:0007669"/>
    <property type="project" value="InterPro"/>
</dbReference>
<dbReference type="GO" id="GO:0016628">
    <property type="term" value="F:oxidoreductase activity, acting on the CH-CH group of donors, NAD or NADP as acceptor"/>
    <property type="evidence" value="ECO:0000266"/>
    <property type="project" value="MGI"/>
</dbReference>
<dbReference type="GO" id="GO:0042605">
    <property type="term" value="F:peptide antigen binding"/>
    <property type="evidence" value="ECO:0000250"/>
    <property type="project" value="UniProtKB"/>
</dbReference>
<dbReference type="GO" id="GO:0042987">
    <property type="term" value="P:amyloid precursor protein catabolic process"/>
    <property type="evidence" value="ECO:0000315"/>
    <property type="project" value="MGI"/>
</dbReference>
<dbReference type="GO" id="GO:0006695">
    <property type="term" value="P:cholesterol biosynthetic process"/>
    <property type="evidence" value="ECO:0000315"/>
    <property type="project" value="UniProtKB"/>
</dbReference>
<dbReference type="GO" id="GO:0033489">
    <property type="term" value="P:cholesterol biosynthetic process via desmosterol"/>
    <property type="evidence" value="ECO:0007669"/>
    <property type="project" value="Ensembl"/>
</dbReference>
<dbReference type="GO" id="GO:0008203">
    <property type="term" value="P:cholesterol metabolic process"/>
    <property type="evidence" value="ECO:0000315"/>
    <property type="project" value="MGI"/>
</dbReference>
<dbReference type="GO" id="GO:0030539">
    <property type="term" value="P:male genitalia development"/>
    <property type="evidence" value="ECO:0000315"/>
    <property type="project" value="MGI"/>
</dbReference>
<dbReference type="GO" id="GO:0061024">
    <property type="term" value="P:membrane organization"/>
    <property type="evidence" value="ECO:0000315"/>
    <property type="project" value="MGI"/>
</dbReference>
<dbReference type="GO" id="GO:0008285">
    <property type="term" value="P:negative regulation of cell population proliferation"/>
    <property type="evidence" value="ECO:0007669"/>
    <property type="project" value="Ensembl"/>
</dbReference>
<dbReference type="GO" id="GO:0031639">
    <property type="term" value="P:plasminogen activation"/>
    <property type="evidence" value="ECO:0000315"/>
    <property type="project" value="MGI"/>
</dbReference>
<dbReference type="GO" id="GO:0008104">
    <property type="term" value="P:protein localization"/>
    <property type="evidence" value="ECO:0000315"/>
    <property type="project" value="MGI"/>
</dbReference>
<dbReference type="GO" id="GO:0007265">
    <property type="term" value="P:Ras protein signal transduction"/>
    <property type="evidence" value="ECO:0007669"/>
    <property type="project" value="Ensembl"/>
</dbReference>
<dbReference type="GO" id="GO:0009725">
    <property type="term" value="P:response to hormone"/>
    <property type="evidence" value="ECO:0007669"/>
    <property type="project" value="Ensembl"/>
</dbReference>
<dbReference type="GO" id="GO:0043588">
    <property type="term" value="P:skin development"/>
    <property type="evidence" value="ECO:0000315"/>
    <property type="project" value="UniProtKB"/>
</dbReference>
<dbReference type="GO" id="GO:0016125">
    <property type="term" value="P:sterol metabolic process"/>
    <property type="evidence" value="ECO:0000315"/>
    <property type="project" value="MGI"/>
</dbReference>
<dbReference type="GO" id="GO:0009888">
    <property type="term" value="P:tissue development"/>
    <property type="evidence" value="ECO:0000315"/>
    <property type="project" value="MGI"/>
</dbReference>
<dbReference type="FunFam" id="3.30.465.10:FF:000032">
    <property type="entry name" value="Delta(24)-sterol reductase"/>
    <property type="match status" value="1"/>
</dbReference>
<dbReference type="Gene3D" id="3.30.465.10">
    <property type="match status" value="1"/>
</dbReference>
<dbReference type="InterPro" id="IPR040165">
    <property type="entry name" value="Diminuto-like"/>
</dbReference>
<dbReference type="InterPro" id="IPR016166">
    <property type="entry name" value="FAD-bd_PCMH"/>
</dbReference>
<dbReference type="InterPro" id="IPR036318">
    <property type="entry name" value="FAD-bd_PCMH-like_sf"/>
</dbReference>
<dbReference type="InterPro" id="IPR016169">
    <property type="entry name" value="FAD-bd_PCMH_sub2"/>
</dbReference>
<dbReference type="InterPro" id="IPR006094">
    <property type="entry name" value="Oxid_FAD_bind_N"/>
</dbReference>
<dbReference type="PANTHER" id="PTHR10801">
    <property type="entry name" value="24-DEHYDROCHOLESTEROL REDUCTASE"/>
    <property type="match status" value="1"/>
</dbReference>
<dbReference type="PANTHER" id="PTHR10801:SF0">
    <property type="entry name" value="DELTA(24)-STEROL REDUCTASE"/>
    <property type="match status" value="1"/>
</dbReference>
<dbReference type="Pfam" id="PF01565">
    <property type="entry name" value="FAD_binding_4"/>
    <property type="match status" value="1"/>
</dbReference>
<dbReference type="SUPFAM" id="SSF56176">
    <property type="entry name" value="FAD-binding/transporter-associated domain-like"/>
    <property type="match status" value="1"/>
</dbReference>
<dbReference type="PROSITE" id="PS51387">
    <property type="entry name" value="FAD_PCMH"/>
    <property type="match status" value="1"/>
</dbReference>
<gene>
    <name type="primary">Dhcr24</name>
    <name type="synonym">Kiaa0018</name>
</gene>
<organism>
    <name type="scientific">Mus musculus</name>
    <name type="common">Mouse</name>
    <dbReference type="NCBI Taxonomy" id="10090"/>
    <lineage>
        <taxon>Eukaryota</taxon>
        <taxon>Metazoa</taxon>
        <taxon>Chordata</taxon>
        <taxon>Craniata</taxon>
        <taxon>Vertebrata</taxon>
        <taxon>Euteleostomi</taxon>
        <taxon>Mammalia</taxon>
        <taxon>Eutheria</taxon>
        <taxon>Euarchontoglires</taxon>
        <taxon>Glires</taxon>
        <taxon>Rodentia</taxon>
        <taxon>Myomorpha</taxon>
        <taxon>Muroidea</taxon>
        <taxon>Muridae</taxon>
        <taxon>Murinae</taxon>
        <taxon>Mus</taxon>
        <taxon>Mus</taxon>
    </lineage>
</organism>
<feature type="signal peptide" evidence="3">
    <location>
        <begin position="1"/>
        <end position="22"/>
    </location>
</feature>
<feature type="chain" id="PRO_0000320300" description="Delta(24)-sterol reductase">
    <location>
        <begin position="23"/>
        <end position="516"/>
    </location>
</feature>
<feature type="topological domain" description="Lumenal" evidence="2">
    <location>
        <begin position="23"/>
        <end position="31"/>
    </location>
</feature>
<feature type="transmembrane region" description="Helical" evidence="3">
    <location>
        <begin position="32"/>
        <end position="52"/>
    </location>
</feature>
<feature type="topological domain" description="Cytoplasmic" evidence="2">
    <location>
        <begin position="53"/>
        <end position="516"/>
    </location>
</feature>
<feature type="domain" description="FAD-binding PCMH-type" evidence="4">
    <location>
        <begin position="58"/>
        <end position="234"/>
    </location>
</feature>
<feature type="binding site" evidence="3">
    <location>
        <begin position="163"/>
        <end position="175"/>
    </location>
    <ligand>
        <name>FAD</name>
        <dbReference type="ChEBI" id="CHEBI:57692"/>
    </ligand>
</feature>
<feature type="site" description="Cleavage; by caspase" evidence="3">
    <location>
        <begin position="122"/>
        <end position="123"/>
    </location>
</feature>
<feature type="site" description="Cleavage; by caspase" evidence="3">
    <location>
        <begin position="383"/>
        <end position="384"/>
    </location>
</feature>
<feature type="sequence conflict" description="In Ref. 5; BAB31012." evidence="7" ref="5">
    <original>SS</original>
    <variation>TN</variation>
    <location>
        <begin position="61"/>
        <end position="62"/>
    </location>
</feature>
<feature type="sequence conflict" description="In Ref. 5; BAB31012." evidence="7" ref="5">
    <original>EQRV</original>
    <variation>NXPL</variation>
    <location>
        <begin position="68"/>
        <end position="71"/>
    </location>
</feature>
<feature type="sequence conflict" description="In Ref. 5; BAB31012." evidence="7" ref="5">
    <original>R</original>
    <variation>P</variation>
    <location>
        <position position="94"/>
    </location>
</feature>
<feature type="sequence conflict" description="In Ref. 1; AAK72106." evidence="7" ref="1">
    <original>V</original>
    <variation>VAV</variation>
    <location>
        <position position="278"/>
    </location>
</feature>
<feature type="sequence conflict" description="In Ref. 1; AAK72106." evidence="7" ref="1">
    <original>P</original>
    <variation>S</variation>
    <location>
        <position position="290"/>
    </location>
</feature>
<proteinExistence type="evidence at protein level"/>
<comment type="function">
    <text evidence="2 5">Catalyzes the reduction of the delta-24 double bond of sterol intermediates during cholesterol biosynthesis (PubMed:26114596). In addition to its cholesterol-synthesizing activity, can protect cells from oxidative stress by reducing caspase 3 activity during apoptosis induced by oxidative stress. Also protects against amyloid-beta peptide-induced apoptosis (By similarity).</text>
</comment>
<comment type="catalytic activity">
    <reaction evidence="5">
        <text>5alpha-cholest-8-en-3beta-ol + NADP(+) = zymosterol + NADPH + H(+)</text>
        <dbReference type="Rhea" id="RHEA:36399"/>
        <dbReference type="ChEBI" id="CHEBI:15378"/>
        <dbReference type="ChEBI" id="CHEBI:16608"/>
        <dbReference type="ChEBI" id="CHEBI:18252"/>
        <dbReference type="ChEBI" id="CHEBI:57783"/>
        <dbReference type="ChEBI" id="CHEBI:58349"/>
        <dbReference type="EC" id="1.3.1.72"/>
    </reaction>
    <physiologicalReaction direction="right-to-left" evidence="8">
        <dbReference type="Rhea" id="RHEA:36401"/>
    </physiologicalReaction>
</comment>
<comment type="catalytic activity">
    <reaction evidence="2">
        <text>cholesterol + NADP(+) = desmosterol + NADPH + H(+)</text>
        <dbReference type="Rhea" id="RHEA:36391"/>
        <dbReference type="ChEBI" id="CHEBI:15378"/>
        <dbReference type="ChEBI" id="CHEBI:16113"/>
        <dbReference type="ChEBI" id="CHEBI:17737"/>
        <dbReference type="ChEBI" id="CHEBI:57783"/>
        <dbReference type="ChEBI" id="CHEBI:58349"/>
        <dbReference type="EC" id="1.3.1.72"/>
    </reaction>
    <physiologicalReaction direction="left-to-right" evidence="2">
        <dbReference type="Rhea" id="RHEA:36392"/>
    </physiologicalReaction>
</comment>
<comment type="catalytic activity">
    <reaction evidence="2">
        <text>lanosterol + NADPH + H(+) = 24,25-dihydrolanosterol + NADP(+)</text>
        <dbReference type="Rhea" id="RHEA:33919"/>
        <dbReference type="ChEBI" id="CHEBI:15378"/>
        <dbReference type="ChEBI" id="CHEBI:16521"/>
        <dbReference type="ChEBI" id="CHEBI:28113"/>
        <dbReference type="ChEBI" id="CHEBI:57783"/>
        <dbReference type="ChEBI" id="CHEBI:58349"/>
    </reaction>
    <physiologicalReaction direction="left-to-right" evidence="2">
        <dbReference type="Rhea" id="RHEA:33920"/>
    </physiologicalReaction>
</comment>
<comment type="cofactor">
    <cofactor evidence="1">
        <name>FAD</name>
        <dbReference type="ChEBI" id="CHEBI:57692"/>
    </cofactor>
</comment>
<comment type="pathway">
    <text evidence="5">Steroid biosynthesis; cholesterol biosynthesis.</text>
</comment>
<comment type="subcellular location">
    <subcellularLocation>
        <location evidence="2">Endoplasmic reticulum membrane</location>
        <topology evidence="3">Single-pass membrane protein</topology>
    </subcellularLocation>
    <subcellularLocation>
        <location evidence="2">Golgi apparatus membrane</location>
        <topology evidence="3">Single-pass membrane protein</topology>
    </subcellularLocation>
</comment>
<comment type="similarity">
    <text evidence="7">Belongs to the FAD-binding oxidoreductase/transferase type 4 family.</text>
</comment>
<comment type="sequence caution" evidence="7">
    <conflict type="erroneous initiation">
        <sequence resource="EMBL-CDS" id="BAC97846"/>
    </conflict>
</comment>